<reference key="1">
    <citation type="journal article" date="2005" name="J. Bacteriol.">
        <title>Swine and poultry pathogens: the complete genome sequences of two strains of Mycoplasma hyopneumoniae and a strain of Mycoplasma synoviae.</title>
        <authorList>
            <person name="Vasconcelos A.T.R."/>
            <person name="Ferreira H.B."/>
            <person name="Bizarro C.V."/>
            <person name="Bonatto S.L."/>
            <person name="Carvalho M.O."/>
            <person name="Pinto P.M."/>
            <person name="Almeida D.F."/>
            <person name="Almeida L.G.P."/>
            <person name="Almeida R."/>
            <person name="Alves-Junior L."/>
            <person name="Assuncao E.N."/>
            <person name="Azevedo V.A.C."/>
            <person name="Bogo M.R."/>
            <person name="Brigido M.M."/>
            <person name="Brocchi M."/>
            <person name="Burity H.A."/>
            <person name="Camargo A.A."/>
            <person name="Camargo S.S."/>
            <person name="Carepo M.S."/>
            <person name="Carraro D.M."/>
            <person name="de Mattos Cascardo J.C."/>
            <person name="Castro L.A."/>
            <person name="Cavalcanti G."/>
            <person name="Chemale G."/>
            <person name="Collevatti R.G."/>
            <person name="Cunha C.W."/>
            <person name="Dallagiovanna B."/>
            <person name="Dambros B.P."/>
            <person name="Dellagostin O.A."/>
            <person name="Falcao C."/>
            <person name="Fantinatti-Garboggini F."/>
            <person name="Felipe M.S.S."/>
            <person name="Fiorentin L."/>
            <person name="Franco G.R."/>
            <person name="Freitas N.S.A."/>
            <person name="Frias D."/>
            <person name="Grangeiro T.B."/>
            <person name="Grisard E.C."/>
            <person name="Guimaraes C.T."/>
            <person name="Hungria M."/>
            <person name="Jardim S.N."/>
            <person name="Krieger M.A."/>
            <person name="Laurino J.P."/>
            <person name="Lima L.F.A."/>
            <person name="Lopes M.I."/>
            <person name="Loreto E.L.S."/>
            <person name="Madeira H.M.F."/>
            <person name="Manfio G.P."/>
            <person name="Maranhao A.Q."/>
            <person name="Martinkovics C.T."/>
            <person name="Medeiros S.R.B."/>
            <person name="Moreira M.A.M."/>
            <person name="Neiva M."/>
            <person name="Ramalho-Neto C.E."/>
            <person name="Nicolas M.F."/>
            <person name="Oliveira S.C."/>
            <person name="Paixao R.F.C."/>
            <person name="Pedrosa F.O."/>
            <person name="Pena S.D.J."/>
            <person name="Pereira M."/>
            <person name="Pereira-Ferrari L."/>
            <person name="Piffer I."/>
            <person name="Pinto L.S."/>
            <person name="Potrich D.P."/>
            <person name="Salim A.C.M."/>
            <person name="Santos F.R."/>
            <person name="Schmitt R."/>
            <person name="Schneider M.P.C."/>
            <person name="Schrank A."/>
            <person name="Schrank I.S."/>
            <person name="Schuck A.F."/>
            <person name="Seuanez H.N."/>
            <person name="Silva D.W."/>
            <person name="Silva R."/>
            <person name="Silva S.C."/>
            <person name="Soares C.M.A."/>
            <person name="Souza K.R.L."/>
            <person name="Souza R.C."/>
            <person name="Staats C.C."/>
            <person name="Steffens M.B.R."/>
            <person name="Teixeira S.M.R."/>
            <person name="Urmenyi T.P."/>
            <person name="Vainstein M.H."/>
            <person name="Zuccherato L.W."/>
            <person name="Simpson A.J.G."/>
            <person name="Zaha A."/>
        </authorList>
    </citation>
    <scope>NUCLEOTIDE SEQUENCE [LARGE SCALE GENOMIC DNA]</scope>
    <source>
        <strain>7448</strain>
    </source>
</reference>
<proteinExistence type="inferred from homology"/>
<protein>
    <recommendedName>
        <fullName evidence="1">Alanine--tRNA ligase</fullName>
        <ecNumber evidence="1">6.1.1.7</ecNumber>
    </recommendedName>
    <alternativeName>
        <fullName evidence="1">Alanyl-tRNA synthetase</fullName>
        <shortName evidence="1">AlaRS</shortName>
    </alternativeName>
</protein>
<gene>
    <name evidence="1" type="primary">alaS</name>
    <name type="ordered locus">MHP7448_0201</name>
</gene>
<accession>Q4A8G4</accession>
<name>SYA_MESH7</name>
<dbReference type="EC" id="6.1.1.7" evidence="1"/>
<dbReference type="EMBL" id="AE017244">
    <property type="protein sequence ID" value="AAZ53575.2"/>
    <property type="molecule type" value="Genomic_DNA"/>
</dbReference>
<dbReference type="RefSeq" id="WP_044272360.1">
    <property type="nucleotide sequence ID" value="NC_007332.1"/>
</dbReference>
<dbReference type="SMR" id="Q4A8G4"/>
<dbReference type="KEGG" id="mhp:MHP7448_0201"/>
<dbReference type="HOGENOM" id="CLU_004485_1_1_14"/>
<dbReference type="Proteomes" id="UP000000553">
    <property type="component" value="Chromosome"/>
</dbReference>
<dbReference type="GO" id="GO:0005829">
    <property type="term" value="C:cytosol"/>
    <property type="evidence" value="ECO:0007669"/>
    <property type="project" value="TreeGrafter"/>
</dbReference>
<dbReference type="GO" id="GO:0004813">
    <property type="term" value="F:alanine-tRNA ligase activity"/>
    <property type="evidence" value="ECO:0007669"/>
    <property type="project" value="UniProtKB-UniRule"/>
</dbReference>
<dbReference type="GO" id="GO:0002161">
    <property type="term" value="F:aminoacyl-tRNA deacylase activity"/>
    <property type="evidence" value="ECO:0007669"/>
    <property type="project" value="TreeGrafter"/>
</dbReference>
<dbReference type="GO" id="GO:0005524">
    <property type="term" value="F:ATP binding"/>
    <property type="evidence" value="ECO:0007669"/>
    <property type="project" value="UniProtKB-UniRule"/>
</dbReference>
<dbReference type="GO" id="GO:0000049">
    <property type="term" value="F:tRNA binding"/>
    <property type="evidence" value="ECO:0007669"/>
    <property type="project" value="UniProtKB-KW"/>
</dbReference>
<dbReference type="GO" id="GO:0008270">
    <property type="term" value="F:zinc ion binding"/>
    <property type="evidence" value="ECO:0007669"/>
    <property type="project" value="UniProtKB-UniRule"/>
</dbReference>
<dbReference type="GO" id="GO:0006419">
    <property type="term" value="P:alanyl-tRNA aminoacylation"/>
    <property type="evidence" value="ECO:0007669"/>
    <property type="project" value="UniProtKB-UniRule"/>
</dbReference>
<dbReference type="CDD" id="cd00673">
    <property type="entry name" value="AlaRS_core"/>
    <property type="match status" value="1"/>
</dbReference>
<dbReference type="FunFam" id="3.30.930.10:FF:000046">
    <property type="entry name" value="Alanine--tRNA ligase"/>
    <property type="match status" value="1"/>
</dbReference>
<dbReference type="FunFam" id="3.30.980.10:FF:000004">
    <property type="entry name" value="Alanine--tRNA ligase, cytoplasmic"/>
    <property type="match status" value="1"/>
</dbReference>
<dbReference type="Gene3D" id="2.40.30.130">
    <property type="match status" value="1"/>
</dbReference>
<dbReference type="Gene3D" id="3.10.310.40">
    <property type="match status" value="1"/>
</dbReference>
<dbReference type="Gene3D" id="3.30.930.10">
    <property type="entry name" value="Bira Bifunctional Protein, Domain 2"/>
    <property type="match status" value="1"/>
</dbReference>
<dbReference type="Gene3D" id="3.30.980.10">
    <property type="entry name" value="Threonyl-trna Synthetase, Chain A, domain 2"/>
    <property type="match status" value="1"/>
</dbReference>
<dbReference type="HAMAP" id="MF_00036_B">
    <property type="entry name" value="Ala_tRNA_synth_B"/>
    <property type="match status" value="1"/>
</dbReference>
<dbReference type="InterPro" id="IPR045864">
    <property type="entry name" value="aa-tRNA-synth_II/BPL/LPL"/>
</dbReference>
<dbReference type="InterPro" id="IPR002318">
    <property type="entry name" value="Ala-tRNA-lgiase_IIc"/>
</dbReference>
<dbReference type="InterPro" id="IPR018162">
    <property type="entry name" value="Ala-tRNA-ligase_IIc_anticod-bd"/>
</dbReference>
<dbReference type="InterPro" id="IPR018165">
    <property type="entry name" value="Ala-tRNA-synth_IIc_core"/>
</dbReference>
<dbReference type="InterPro" id="IPR018164">
    <property type="entry name" value="Ala-tRNA-synth_IIc_N"/>
</dbReference>
<dbReference type="InterPro" id="IPR050058">
    <property type="entry name" value="Ala-tRNA_ligase"/>
</dbReference>
<dbReference type="InterPro" id="IPR023033">
    <property type="entry name" value="Ala_tRNA_ligase_euk/bac"/>
</dbReference>
<dbReference type="InterPro" id="IPR018163">
    <property type="entry name" value="Thr/Ala-tRNA-synth_IIc_edit"/>
</dbReference>
<dbReference type="InterPro" id="IPR009000">
    <property type="entry name" value="Transl_B-barrel_sf"/>
</dbReference>
<dbReference type="InterPro" id="IPR012947">
    <property type="entry name" value="tRNA_SAD"/>
</dbReference>
<dbReference type="NCBIfam" id="TIGR00344">
    <property type="entry name" value="alaS"/>
    <property type="match status" value="1"/>
</dbReference>
<dbReference type="PANTHER" id="PTHR11777:SF9">
    <property type="entry name" value="ALANINE--TRNA LIGASE, CYTOPLASMIC"/>
    <property type="match status" value="1"/>
</dbReference>
<dbReference type="PANTHER" id="PTHR11777">
    <property type="entry name" value="ALANYL-TRNA SYNTHETASE"/>
    <property type="match status" value="1"/>
</dbReference>
<dbReference type="Pfam" id="PF01411">
    <property type="entry name" value="tRNA-synt_2c"/>
    <property type="match status" value="1"/>
</dbReference>
<dbReference type="Pfam" id="PF07973">
    <property type="entry name" value="tRNA_SAD"/>
    <property type="match status" value="1"/>
</dbReference>
<dbReference type="PRINTS" id="PR00980">
    <property type="entry name" value="TRNASYNTHALA"/>
</dbReference>
<dbReference type="SMART" id="SM00863">
    <property type="entry name" value="tRNA_SAD"/>
    <property type="match status" value="1"/>
</dbReference>
<dbReference type="SUPFAM" id="SSF55681">
    <property type="entry name" value="Class II aaRS and biotin synthetases"/>
    <property type="match status" value="1"/>
</dbReference>
<dbReference type="SUPFAM" id="SSF101353">
    <property type="entry name" value="Putative anticodon-binding domain of alanyl-tRNA synthetase (AlaRS)"/>
    <property type="match status" value="1"/>
</dbReference>
<dbReference type="SUPFAM" id="SSF55186">
    <property type="entry name" value="ThrRS/AlaRS common domain"/>
    <property type="match status" value="1"/>
</dbReference>
<dbReference type="SUPFAM" id="SSF50447">
    <property type="entry name" value="Translation proteins"/>
    <property type="match status" value="1"/>
</dbReference>
<dbReference type="PROSITE" id="PS50860">
    <property type="entry name" value="AA_TRNA_LIGASE_II_ALA"/>
    <property type="match status" value="1"/>
</dbReference>
<comment type="function">
    <text evidence="1">Catalyzes the attachment of alanine to tRNA(Ala) in a two-step reaction: alanine is first activated by ATP to form Ala-AMP and then transferred to the acceptor end of tRNA(Ala). Also edits incorrectly charged Ser-tRNA(Ala) and Gly-tRNA(Ala) via its editing domain.</text>
</comment>
<comment type="catalytic activity">
    <reaction evidence="1">
        <text>tRNA(Ala) + L-alanine + ATP = L-alanyl-tRNA(Ala) + AMP + diphosphate</text>
        <dbReference type="Rhea" id="RHEA:12540"/>
        <dbReference type="Rhea" id="RHEA-COMP:9657"/>
        <dbReference type="Rhea" id="RHEA-COMP:9923"/>
        <dbReference type="ChEBI" id="CHEBI:30616"/>
        <dbReference type="ChEBI" id="CHEBI:33019"/>
        <dbReference type="ChEBI" id="CHEBI:57972"/>
        <dbReference type="ChEBI" id="CHEBI:78442"/>
        <dbReference type="ChEBI" id="CHEBI:78497"/>
        <dbReference type="ChEBI" id="CHEBI:456215"/>
        <dbReference type="EC" id="6.1.1.7"/>
    </reaction>
</comment>
<comment type="cofactor">
    <cofactor evidence="1">
        <name>Zn(2+)</name>
        <dbReference type="ChEBI" id="CHEBI:29105"/>
    </cofactor>
    <text evidence="1">Binds 1 zinc ion per subunit.</text>
</comment>
<comment type="subcellular location">
    <subcellularLocation>
        <location evidence="1">Cytoplasm</location>
    </subcellularLocation>
</comment>
<comment type="domain">
    <text evidence="1">Consists of three domains; the N-terminal catalytic domain, the editing domain and the C-terminal C-Ala domain. The editing domain removes incorrectly charged amino acids, while the C-Ala domain, along with tRNA(Ala), serves as a bridge to cooperatively bring together the editing and aminoacylation centers thus stimulating deacylation of misacylated tRNAs.</text>
</comment>
<comment type="similarity">
    <text evidence="1">Belongs to the class-II aminoacyl-tRNA synthetase family.</text>
</comment>
<keyword id="KW-0030">Aminoacyl-tRNA synthetase</keyword>
<keyword id="KW-0067">ATP-binding</keyword>
<keyword id="KW-0963">Cytoplasm</keyword>
<keyword id="KW-0436">Ligase</keyword>
<keyword id="KW-0479">Metal-binding</keyword>
<keyword id="KW-0547">Nucleotide-binding</keyword>
<keyword id="KW-0648">Protein biosynthesis</keyword>
<keyword id="KW-0694">RNA-binding</keyword>
<keyword id="KW-0820">tRNA-binding</keyword>
<keyword id="KW-0862">Zinc</keyword>
<organism>
    <name type="scientific">Mesomycoplasma hyopneumoniae (strain 7448)</name>
    <name type="common">Mycoplasma hyopneumoniae</name>
    <dbReference type="NCBI Taxonomy" id="262722"/>
    <lineage>
        <taxon>Bacteria</taxon>
        <taxon>Bacillati</taxon>
        <taxon>Mycoplasmatota</taxon>
        <taxon>Mycoplasmoidales</taxon>
        <taxon>Metamycoplasmataceae</taxon>
        <taxon>Mesomycoplasma</taxon>
    </lineage>
</organism>
<evidence type="ECO:0000255" key="1">
    <source>
        <dbReference type="HAMAP-Rule" id="MF_00036"/>
    </source>
</evidence>
<sequence length="883" mass="102389">MEKLSANKIRQLWIDFFREKNHFFIESKPLVPQNDDSLLWINSGVATLKDYFTGKKIPPSKRLVNSQKALRTNDIENVGLTSRHHTLFEMLGNFSIGDYFKTEAIDYAYEFLTKKLKLDPKNLFITYYDGDDITFEKWKSLGFSNEKLIKGSRKTNFWDLGQGPCGPCSEIYFDRGPKFDSRGSELIKNEIENDRFIEIWNIVFSEFNNDGQQNYTPLKSKNIDTGAGFERIVSILQDGPTNYDTDLFLPIIAEIEKSTVFQYKIENYFLKEPRQTQINKSFRIIADHIRAITLAINDGVQPSNLHRGYIIRRLIRRAYWNGKKLGISHPFLYKLVEIVGKTLDYRFDIQTISKIILNEEENFAKTLEIGYNLLESQLKINKNQIKPVTVFKLFETYGFPVELTKEILAEKNIDFDLSQLVEFQEKHSQISRAKKTTGMQKVINSLTQIKAKISDFIGYHTHHIETKISFLANKDEEVAETNGENLSYVIFEKTPFYATAGGQKHDQGWIIQNNSTIEILDVFKDKFLNNIHVFKGKIVKNQPVFLKLDTKNRLNLERNHSGTHLLFASLRQEFGSEIKQLGSDNNENRLTFDFPLNRKPSDQEIKSVENRINSYINQKIKRKYLVTNLEEAQKLNAIMTLEESEYMDPNSLRLVIFDKITTDLCGGTHIENTELLEKFTILSCQSKGSGIYRIRAVTSWNKYFEFLKGKIQEILSKISALKNKIKKIEPNFGLNLPNLVDLEQQFDYLKKIEDDLKIYYKKLLKSQLRIVKSELDANKIIEIGKFSFYLDFNLPLHNLKQIAATWREQNPRISFILGANLVNNEFLIIVSSAILASNQILEKILEIFTGSGGGNYKIAQGKIQKKPEKEVFIKLLWENITEF</sequence>
<feature type="chain" id="PRO_0000075151" description="Alanine--tRNA ligase">
    <location>
        <begin position="1"/>
        <end position="883"/>
    </location>
</feature>
<feature type="binding site" evidence="1">
    <location>
        <position position="560"/>
    </location>
    <ligand>
        <name>Zn(2+)</name>
        <dbReference type="ChEBI" id="CHEBI:29105"/>
    </ligand>
</feature>
<feature type="binding site" evidence="1">
    <location>
        <position position="564"/>
    </location>
    <ligand>
        <name>Zn(2+)</name>
        <dbReference type="ChEBI" id="CHEBI:29105"/>
    </ligand>
</feature>
<feature type="binding site" evidence="1">
    <location>
        <position position="665"/>
    </location>
    <ligand>
        <name>Zn(2+)</name>
        <dbReference type="ChEBI" id="CHEBI:29105"/>
    </ligand>
</feature>
<feature type="binding site" evidence="1">
    <location>
        <position position="669"/>
    </location>
    <ligand>
        <name>Zn(2+)</name>
        <dbReference type="ChEBI" id="CHEBI:29105"/>
    </ligand>
</feature>